<reference key="1">
    <citation type="journal article" date="2001" name="Nature">
        <title>Genome sequence of Yersinia pestis, the causative agent of plague.</title>
        <authorList>
            <person name="Parkhill J."/>
            <person name="Wren B.W."/>
            <person name="Thomson N.R."/>
            <person name="Titball R.W."/>
            <person name="Holden M.T.G."/>
            <person name="Prentice M.B."/>
            <person name="Sebaihia M."/>
            <person name="James K.D."/>
            <person name="Churcher C.M."/>
            <person name="Mungall K.L."/>
            <person name="Baker S."/>
            <person name="Basham D."/>
            <person name="Bentley S.D."/>
            <person name="Brooks K."/>
            <person name="Cerdeno-Tarraga A.-M."/>
            <person name="Chillingworth T."/>
            <person name="Cronin A."/>
            <person name="Davies R.M."/>
            <person name="Davis P."/>
            <person name="Dougan G."/>
            <person name="Feltwell T."/>
            <person name="Hamlin N."/>
            <person name="Holroyd S."/>
            <person name="Jagels K."/>
            <person name="Karlyshev A.V."/>
            <person name="Leather S."/>
            <person name="Moule S."/>
            <person name="Oyston P.C.F."/>
            <person name="Quail M.A."/>
            <person name="Rutherford K.M."/>
            <person name="Simmonds M."/>
            <person name="Skelton J."/>
            <person name="Stevens K."/>
            <person name="Whitehead S."/>
            <person name="Barrell B.G."/>
        </authorList>
    </citation>
    <scope>NUCLEOTIDE SEQUENCE [LARGE SCALE GENOMIC DNA]</scope>
    <source>
        <strain>CO-92 / Biovar Orientalis</strain>
    </source>
</reference>
<reference key="2">
    <citation type="journal article" date="2002" name="J. Bacteriol.">
        <title>Genome sequence of Yersinia pestis KIM.</title>
        <authorList>
            <person name="Deng W."/>
            <person name="Burland V."/>
            <person name="Plunkett G. III"/>
            <person name="Boutin A."/>
            <person name="Mayhew G.F."/>
            <person name="Liss P."/>
            <person name="Perna N.T."/>
            <person name="Rose D.J."/>
            <person name="Mau B."/>
            <person name="Zhou S."/>
            <person name="Schwartz D.C."/>
            <person name="Fetherston J.D."/>
            <person name="Lindler L.E."/>
            <person name="Brubaker R.R."/>
            <person name="Plano G.V."/>
            <person name="Straley S.C."/>
            <person name="McDonough K.A."/>
            <person name="Nilles M.L."/>
            <person name="Matson J.S."/>
            <person name="Blattner F.R."/>
            <person name="Perry R.D."/>
        </authorList>
    </citation>
    <scope>NUCLEOTIDE SEQUENCE [LARGE SCALE GENOMIC DNA]</scope>
    <source>
        <strain>KIM10+ / Biovar Mediaevalis</strain>
    </source>
</reference>
<reference key="3">
    <citation type="journal article" date="2004" name="DNA Res.">
        <title>Complete genome sequence of Yersinia pestis strain 91001, an isolate avirulent to humans.</title>
        <authorList>
            <person name="Song Y."/>
            <person name="Tong Z."/>
            <person name="Wang J."/>
            <person name="Wang L."/>
            <person name="Guo Z."/>
            <person name="Han Y."/>
            <person name="Zhang J."/>
            <person name="Pei D."/>
            <person name="Zhou D."/>
            <person name="Qin H."/>
            <person name="Pang X."/>
            <person name="Han Y."/>
            <person name="Zhai J."/>
            <person name="Li M."/>
            <person name="Cui B."/>
            <person name="Qi Z."/>
            <person name="Jin L."/>
            <person name="Dai R."/>
            <person name="Chen F."/>
            <person name="Li S."/>
            <person name="Ye C."/>
            <person name="Du Z."/>
            <person name="Lin W."/>
            <person name="Wang J."/>
            <person name="Yu J."/>
            <person name="Yang H."/>
            <person name="Wang J."/>
            <person name="Huang P."/>
            <person name="Yang R."/>
        </authorList>
    </citation>
    <scope>NUCLEOTIDE SEQUENCE [LARGE SCALE GENOMIC DNA]</scope>
    <source>
        <strain>91001 / Biovar Mediaevalis</strain>
    </source>
</reference>
<feature type="chain" id="PRO_0000094484" description="H(+)/Cl(-) exchange transporter ClcA">
    <location>
        <begin position="1"/>
        <end position="478"/>
    </location>
</feature>
<feature type="topological domain" description="Cytoplasmic" evidence="1">
    <location>
        <begin position="1"/>
        <end position="32"/>
    </location>
</feature>
<feature type="transmembrane region" description="Helical" evidence="1">
    <location>
        <begin position="33"/>
        <end position="69"/>
    </location>
</feature>
<feature type="topological domain" description="Periplasmic" evidence="1">
    <location>
        <begin position="70"/>
        <end position="76"/>
    </location>
</feature>
<feature type="transmembrane region" description="Helical" evidence="1">
    <location>
        <begin position="77"/>
        <end position="100"/>
    </location>
</feature>
<feature type="intramembrane region" description="Helical" evidence="1">
    <location>
        <begin position="109"/>
        <end position="116"/>
    </location>
</feature>
<feature type="topological domain" description="Cytoplasmic" evidence="1">
    <location>
        <begin position="117"/>
        <end position="123"/>
    </location>
</feature>
<feature type="transmembrane region" description="Helical" evidence="1">
    <location>
        <begin position="124"/>
        <end position="141"/>
    </location>
</feature>
<feature type="transmembrane region" description="Helical" evidence="1">
    <location>
        <begin position="148"/>
        <end position="166"/>
    </location>
</feature>
<feature type="topological domain" description="Cytoplasmic" evidence="1">
    <location>
        <begin position="167"/>
        <end position="176"/>
    </location>
</feature>
<feature type="intramembrane region" description="Helical" evidence="1">
    <location>
        <begin position="177"/>
        <end position="189"/>
    </location>
</feature>
<feature type="intramembrane region" description="Helical" evidence="1">
    <location>
        <begin position="193"/>
        <end position="201"/>
    </location>
</feature>
<feature type="topological domain" description="Cytoplasmic" evidence="1">
    <location>
        <begin position="202"/>
        <end position="214"/>
    </location>
</feature>
<feature type="transmembrane region" description="Helical" evidence="1">
    <location>
        <begin position="215"/>
        <end position="232"/>
    </location>
</feature>
<feature type="topological domain" description="Periplasmic" evidence="1">
    <location>
        <begin position="233"/>
        <end position="252"/>
    </location>
</feature>
<feature type="transmembrane region" description="Helical" evidence="1">
    <location>
        <begin position="253"/>
        <end position="281"/>
    </location>
</feature>
<feature type="topological domain" description="Cytoplasmic" evidence="1">
    <location>
        <begin position="282"/>
        <end position="287"/>
    </location>
</feature>
<feature type="transmembrane region" description="Helical" evidence="1">
    <location>
        <begin position="288"/>
        <end position="309"/>
    </location>
</feature>
<feature type="topological domain" description="Periplasmic" evidence="1">
    <location>
        <begin position="310"/>
        <end position="329"/>
    </location>
</feature>
<feature type="transmembrane region" description="Helical" evidence="1">
    <location>
        <begin position="330"/>
        <end position="349"/>
    </location>
</feature>
<feature type="transmembrane region" description="Helical" evidence="1">
    <location>
        <begin position="355"/>
        <end position="376"/>
    </location>
</feature>
<feature type="topological domain" description="Periplasmic" evidence="1">
    <location>
        <begin position="377"/>
        <end position="386"/>
    </location>
</feature>
<feature type="intramembrane region" description="Helical" evidence="1">
    <location>
        <begin position="387"/>
        <end position="401"/>
    </location>
</feature>
<feature type="intramembrane region" description="Note=Loop between two helices" evidence="1">
    <location>
        <begin position="402"/>
        <end position="404"/>
    </location>
</feature>
<feature type="intramembrane region" description="Helical" evidence="1">
    <location>
        <begin position="405"/>
        <end position="416"/>
    </location>
</feature>
<feature type="intramembrane region" description="Note=Loop between two helices" evidence="1">
    <location>
        <begin position="417"/>
        <end position="421"/>
    </location>
</feature>
<feature type="transmembrane region" description="Helical" evidence="1">
    <location>
        <begin position="422"/>
        <end position="438"/>
    </location>
</feature>
<feature type="topological domain" description="Cytoplasmic" evidence="1">
    <location>
        <begin position="439"/>
        <end position="478"/>
    </location>
</feature>
<feature type="short sequence motif" description="Selectivity filter part_1" evidence="1">
    <location>
        <begin position="106"/>
        <end position="110"/>
    </location>
</feature>
<feature type="short sequence motif" description="Selectivity filter part_2" evidence="1">
    <location>
        <begin position="146"/>
        <end position="150"/>
    </location>
</feature>
<feature type="short sequence motif" description="Selectivity filter part_3" evidence="1">
    <location>
        <begin position="355"/>
        <end position="359"/>
    </location>
</feature>
<feature type="binding site" evidence="1">
    <location>
        <position position="107"/>
    </location>
    <ligand>
        <name>chloride</name>
        <dbReference type="ChEBI" id="CHEBI:17996"/>
    </ligand>
</feature>
<feature type="binding site" evidence="1">
    <location>
        <position position="356"/>
    </location>
    <ligand>
        <name>chloride</name>
        <dbReference type="ChEBI" id="CHEBI:17996"/>
    </ligand>
</feature>
<feature type="binding site" evidence="1">
    <location>
        <position position="357"/>
    </location>
    <ligand>
        <name>chloride</name>
        <dbReference type="ChEBI" id="CHEBI:17996"/>
    </ligand>
</feature>
<feature type="binding site" evidence="1">
    <location>
        <position position="445"/>
    </location>
    <ligand>
        <name>chloride</name>
        <dbReference type="ChEBI" id="CHEBI:17996"/>
    </ligand>
</feature>
<feature type="site" description="Mediates proton transfer from the outer aqueous phase to the interior of the protein; involved in linking H(+) and Cl(-) transport" evidence="1">
    <location>
        <position position="148"/>
    </location>
</feature>
<feature type="site" description="Mediates proton transfer from the protein to the inner aqueous phase" evidence="1">
    <location>
        <position position="203"/>
    </location>
</feature>
<feature type="sequence conflict" description="In Ref. 2; AAM84387." evidence="2" ref="2">
    <original>K</original>
    <variation>KII</variation>
    <location>
        <position position="478"/>
    </location>
</feature>
<comment type="function">
    <text evidence="1">Proton-coupled chloride transporter. Functions as antiport system and exchanges two chloride ions for 1 proton. Probably acts as an electrical shunt for an outwardly-directed proton pump that is linked to amino acid decarboxylation, as part of the extreme acid resistance (XAR) response.</text>
</comment>
<comment type="catalytic activity">
    <reaction evidence="1">
        <text>2 chloride(in) + H(+)(out) = 2 chloride(out) + H(+)(in)</text>
        <dbReference type="Rhea" id="RHEA:29567"/>
        <dbReference type="ChEBI" id="CHEBI:15378"/>
        <dbReference type="ChEBI" id="CHEBI:17996"/>
    </reaction>
</comment>
<comment type="subunit">
    <text evidence="1">Homodimer.</text>
</comment>
<comment type="subcellular location">
    <subcellularLocation>
        <location evidence="1">Cell inner membrane</location>
        <topology evidence="1">Multi-pass membrane protein</topology>
    </subcellularLocation>
</comment>
<comment type="similarity">
    <text evidence="1">Belongs to the chloride channel (TC 2.A.49) family. ClcA subfamily.</text>
</comment>
<comment type="sequence caution" evidence="2">
    <conflict type="erroneous initiation">
        <sequence resource="EMBL-CDS" id="CAL21977"/>
    </conflict>
</comment>
<gene>
    <name evidence="1" type="primary">clcA</name>
    <name evidence="1" type="synonym">eriC</name>
    <name type="ordered locus">YPO3388</name>
    <name type="ordered locus">y0800</name>
    <name type="ordered locus">YP_0297</name>
</gene>
<name>CLCA_YERPE</name>
<protein>
    <recommendedName>
        <fullName evidence="1">H(+)/Cl(-) exchange transporter ClcA</fullName>
    </recommendedName>
</protein>
<organism>
    <name type="scientific">Yersinia pestis</name>
    <dbReference type="NCBI Taxonomy" id="632"/>
    <lineage>
        <taxon>Bacteria</taxon>
        <taxon>Pseudomonadati</taxon>
        <taxon>Pseudomonadota</taxon>
        <taxon>Gammaproteobacteria</taxon>
        <taxon>Enterobacterales</taxon>
        <taxon>Yersiniaceae</taxon>
        <taxon>Yersinia</taxon>
    </lineage>
</organism>
<sequence length="478" mass="50847">MTHSTQQLSPEGVAEGKRGRLIRELVNRDKTPLIILIMAAVVGVVTGLLGVAFDRGVDWVQQQRLLALANVADYALLVWPLAFIMSALLAMMGYFLVSRFAPEAGGSGIPEIEGAMEEMRPVRWWRVIPVKFIGGLGTLGAGMVLGREGPMVQMGGNSGRMIVDIFRLRSPEARHSLLATGAAAGLSAAFNAPLAGILFVIEEMRSQFRYSLVSIKAVFIGVITSTIVYRYFNGERAIIEVGKLSDAPLNTLWLYLLLGIIFGAVGVIFNALIFRTQDMFVRFHGGDWRKLVLIGGLLGGMCGLLALLHGNAVGGGFALIPIAAAGNFSIGMLLFIFIARVITTLLCFGSGAPGGIFAPMLALGTILGTAFGLSCAHFFPQYGIEAGTFAIAGMGALFAASVRAPLTGIVLVLEMTDNYQLILPMIVTCLGATLIAQFMGGKPLYSAILARTLAKQEQARATVIAQEPAVENTPQIGK</sequence>
<keyword id="KW-0050">Antiport</keyword>
<keyword id="KW-0997">Cell inner membrane</keyword>
<keyword id="KW-1003">Cell membrane</keyword>
<keyword id="KW-0868">Chloride</keyword>
<keyword id="KW-0406">Ion transport</keyword>
<keyword id="KW-0472">Membrane</keyword>
<keyword id="KW-1185">Reference proteome</keyword>
<keyword id="KW-0812">Transmembrane</keyword>
<keyword id="KW-1133">Transmembrane helix</keyword>
<keyword id="KW-0813">Transport</keyword>
<evidence type="ECO:0000255" key="1">
    <source>
        <dbReference type="HAMAP-Rule" id="MF_01128"/>
    </source>
</evidence>
<evidence type="ECO:0000305" key="2"/>
<dbReference type="EMBL" id="AL590842">
    <property type="protein sequence ID" value="CAL21977.1"/>
    <property type="status" value="ALT_INIT"/>
    <property type="molecule type" value="Genomic_DNA"/>
</dbReference>
<dbReference type="EMBL" id="AE009952">
    <property type="protein sequence ID" value="AAM84387.1"/>
    <property type="molecule type" value="Genomic_DNA"/>
</dbReference>
<dbReference type="EMBL" id="AE017042">
    <property type="protein sequence ID" value="AAS60572.1"/>
    <property type="molecule type" value="Genomic_DNA"/>
</dbReference>
<dbReference type="PIR" id="AF0411">
    <property type="entry name" value="AF0411"/>
</dbReference>
<dbReference type="RefSeq" id="WP_002209364.1">
    <property type="nucleotide sequence ID" value="NZ_WUCM01000008.1"/>
</dbReference>
<dbReference type="RefSeq" id="WP_011055305.1">
    <property type="nucleotide sequence ID" value="NZ_CP162311.1"/>
</dbReference>
<dbReference type="SMR" id="Q8ZBM0"/>
<dbReference type="IntAct" id="Q8ZBM0">
    <property type="interactions" value="4"/>
</dbReference>
<dbReference type="STRING" id="214092.YPO3388"/>
<dbReference type="PaxDb" id="214092-YPO3388"/>
<dbReference type="DNASU" id="1145747"/>
<dbReference type="EnsemblBacteria" id="AAS60572">
    <property type="protein sequence ID" value="AAS60572"/>
    <property type="gene ID" value="YP_0297"/>
</dbReference>
<dbReference type="GeneID" id="57975321"/>
<dbReference type="KEGG" id="ype:YPO3388"/>
<dbReference type="KEGG" id="ypk:y0800"/>
<dbReference type="KEGG" id="ypm:YP_0297"/>
<dbReference type="PATRIC" id="fig|632.151.peg.1013"/>
<dbReference type="eggNOG" id="COG0038">
    <property type="taxonomic scope" value="Bacteria"/>
</dbReference>
<dbReference type="HOGENOM" id="CLU_015263_7_0_6"/>
<dbReference type="OMA" id="EGPTAQF"/>
<dbReference type="OrthoDB" id="9767361at2"/>
<dbReference type="Proteomes" id="UP000000815">
    <property type="component" value="Chromosome"/>
</dbReference>
<dbReference type="Proteomes" id="UP000001019">
    <property type="component" value="Chromosome"/>
</dbReference>
<dbReference type="Proteomes" id="UP000002490">
    <property type="component" value="Chromosome"/>
</dbReference>
<dbReference type="GO" id="GO:0005886">
    <property type="term" value="C:plasma membrane"/>
    <property type="evidence" value="ECO:0000318"/>
    <property type="project" value="GO_Central"/>
</dbReference>
<dbReference type="GO" id="GO:0015297">
    <property type="term" value="F:antiporter activity"/>
    <property type="evidence" value="ECO:0007669"/>
    <property type="project" value="UniProtKB-UniRule"/>
</dbReference>
<dbReference type="GO" id="GO:0005247">
    <property type="term" value="F:voltage-gated chloride channel activity"/>
    <property type="evidence" value="ECO:0000318"/>
    <property type="project" value="GO_Central"/>
</dbReference>
<dbReference type="CDD" id="cd01031">
    <property type="entry name" value="EriC"/>
    <property type="match status" value="1"/>
</dbReference>
<dbReference type="FunFam" id="1.10.3080.10:FF:000005">
    <property type="entry name" value="H(+)/Cl(-) exchange transporter ClcA"/>
    <property type="match status" value="1"/>
</dbReference>
<dbReference type="Gene3D" id="1.10.3080.10">
    <property type="entry name" value="Clc chloride channel"/>
    <property type="match status" value="1"/>
</dbReference>
<dbReference type="HAMAP" id="MF_01128">
    <property type="entry name" value="CLC_ClcA"/>
    <property type="match status" value="1"/>
</dbReference>
<dbReference type="InterPro" id="IPR023861">
    <property type="entry name" value="Cl-channel_ClcA"/>
</dbReference>
<dbReference type="InterPro" id="IPR014743">
    <property type="entry name" value="Cl-channel_core"/>
</dbReference>
<dbReference type="InterPro" id="IPR001807">
    <property type="entry name" value="ClC"/>
</dbReference>
<dbReference type="NCBIfam" id="NF003640">
    <property type="entry name" value="PRK05277.1"/>
    <property type="match status" value="1"/>
</dbReference>
<dbReference type="PANTHER" id="PTHR45711">
    <property type="entry name" value="CHLORIDE CHANNEL PROTEIN"/>
    <property type="match status" value="1"/>
</dbReference>
<dbReference type="PANTHER" id="PTHR45711:SF6">
    <property type="entry name" value="CHLORIDE CHANNEL PROTEIN"/>
    <property type="match status" value="1"/>
</dbReference>
<dbReference type="Pfam" id="PF00654">
    <property type="entry name" value="Voltage_CLC"/>
    <property type="match status" value="1"/>
</dbReference>
<dbReference type="PRINTS" id="PR00762">
    <property type="entry name" value="CLCHANNEL"/>
</dbReference>
<dbReference type="SUPFAM" id="SSF81340">
    <property type="entry name" value="Clc chloride channel"/>
    <property type="match status" value="1"/>
</dbReference>
<proteinExistence type="inferred from homology"/>
<accession>Q8ZBM0</accession>
<accession>Q0WBQ8</accession>